<feature type="chain" id="PRO_0000411869" description="Probable Xaa-Pro aminopeptidase PEPP">
    <location>
        <begin position="1"/>
        <end position="469"/>
    </location>
</feature>
<feature type="binding site" evidence="1">
    <location>
        <position position="265"/>
    </location>
    <ligand>
        <name>Mn(2+)</name>
        <dbReference type="ChEBI" id="CHEBI:29035"/>
        <label>2</label>
    </ligand>
</feature>
<feature type="binding site" evidence="1">
    <location>
        <position position="276"/>
    </location>
    <ligand>
        <name>Mn(2+)</name>
        <dbReference type="ChEBI" id="CHEBI:29035"/>
        <label>1</label>
    </ligand>
</feature>
<feature type="binding site" evidence="1">
    <location>
        <position position="276"/>
    </location>
    <ligand>
        <name>Mn(2+)</name>
        <dbReference type="ChEBI" id="CHEBI:29035"/>
        <label>2</label>
    </ligand>
</feature>
<feature type="binding site" evidence="1">
    <location>
        <position position="399"/>
    </location>
    <ligand>
        <name>Mn(2+)</name>
        <dbReference type="ChEBI" id="CHEBI:29035"/>
        <label>1</label>
    </ligand>
</feature>
<feature type="binding site" evidence="1">
    <location>
        <position position="439"/>
    </location>
    <ligand>
        <name>Mn(2+)</name>
        <dbReference type="ChEBI" id="CHEBI:29035"/>
        <label>1</label>
    </ligand>
</feature>
<feature type="binding site" evidence="1">
    <location>
        <position position="439"/>
    </location>
    <ligand>
        <name>Mn(2+)</name>
        <dbReference type="ChEBI" id="CHEBI:29035"/>
        <label>2</label>
    </ligand>
</feature>
<accession>C5PHM7</accession>
<gene>
    <name type="primary">PEPP</name>
    <name type="ORF">CPC735_054000</name>
</gene>
<protein>
    <recommendedName>
        <fullName>Probable Xaa-Pro aminopeptidase PEPP</fullName>
        <ecNumber>3.4.11.9</ecNumber>
    </recommendedName>
    <alternativeName>
        <fullName>Aminoacylproline aminopeptidase</fullName>
    </alternativeName>
    <alternativeName>
        <fullName>Prolidase</fullName>
    </alternativeName>
</protein>
<keyword id="KW-0031">Aminopeptidase</keyword>
<keyword id="KW-0378">Hydrolase</keyword>
<keyword id="KW-0464">Manganese</keyword>
<keyword id="KW-0479">Metal-binding</keyword>
<keyword id="KW-0482">Metalloprotease</keyword>
<keyword id="KW-0645">Protease</keyword>
<proteinExistence type="inferred from homology"/>
<organism>
    <name type="scientific">Coccidioides posadasii (strain C735)</name>
    <name type="common">Valley fever fungus</name>
    <dbReference type="NCBI Taxonomy" id="222929"/>
    <lineage>
        <taxon>Eukaryota</taxon>
        <taxon>Fungi</taxon>
        <taxon>Dikarya</taxon>
        <taxon>Ascomycota</taxon>
        <taxon>Pezizomycotina</taxon>
        <taxon>Eurotiomycetes</taxon>
        <taxon>Eurotiomycetidae</taxon>
        <taxon>Onygenales</taxon>
        <taxon>Onygenaceae</taxon>
        <taxon>Coccidioides</taxon>
    </lineage>
</organism>
<dbReference type="EC" id="3.4.11.9"/>
<dbReference type="EMBL" id="ACFW01000049">
    <property type="protein sequence ID" value="EER24030.1"/>
    <property type="molecule type" value="Genomic_DNA"/>
</dbReference>
<dbReference type="RefSeq" id="XP_003066175.1">
    <property type="nucleotide sequence ID" value="XM_003066129.1"/>
</dbReference>
<dbReference type="SMR" id="C5PHM7"/>
<dbReference type="KEGG" id="cpw:9691645"/>
<dbReference type="VEuPathDB" id="FungiDB:CPC735_054000"/>
<dbReference type="HOGENOM" id="CLU_017266_1_2_1"/>
<dbReference type="OrthoDB" id="10261878at2759"/>
<dbReference type="Proteomes" id="UP000009084">
    <property type="component" value="Unassembled WGS sequence"/>
</dbReference>
<dbReference type="GO" id="GO:0030145">
    <property type="term" value="F:manganese ion binding"/>
    <property type="evidence" value="ECO:0007669"/>
    <property type="project" value="InterPro"/>
</dbReference>
<dbReference type="GO" id="GO:0070006">
    <property type="term" value="F:metalloaminopeptidase activity"/>
    <property type="evidence" value="ECO:0007669"/>
    <property type="project" value="InterPro"/>
</dbReference>
<dbReference type="GO" id="GO:0006508">
    <property type="term" value="P:proteolysis"/>
    <property type="evidence" value="ECO:0007669"/>
    <property type="project" value="UniProtKB-KW"/>
</dbReference>
<dbReference type="CDD" id="cd01087">
    <property type="entry name" value="Prolidase"/>
    <property type="match status" value="1"/>
</dbReference>
<dbReference type="FunFam" id="3.90.230.10:FF:000002">
    <property type="entry name" value="Xaa-Pro aminopeptidase 3"/>
    <property type="match status" value="1"/>
</dbReference>
<dbReference type="Gene3D" id="3.90.230.10">
    <property type="entry name" value="Creatinase/methionine aminopeptidase superfamily"/>
    <property type="match status" value="1"/>
</dbReference>
<dbReference type="Gene3D" id="3.40.350.10">
    <property type="entry name" value="Creatinase/prolidase N-terminal domain"/>
    <property type="match status" value="1"/>
</dbReference>
<dbReference type="InterPro" id="IPR007865">
    <property type="entry name" value="Aminopep_P_N"/>
</dbReference>
<dbReference type="InterPro" id="IPR029149">
    <property type="entry name" value="Creatin/AminoP/Spt16_N"/>
</dbReference>
<dbReference type="InterPro" id="IPR036005">
    <property type="entry name" value="Creatinase/aminopeptidase-like"/>
</dbReference>
<dbReference type="InterPro" id="IPR000994">
    <property type="entry name" value="Pept_M24"/>
</dbReference>
<dbReference type="InterPro" id="IPR052433">
    <property type="entry name" value="X-Pro_dipept-like"/>
</dbReference>
<dbReference type="PANTHER" id="PTHR43226">
    <property type="entry name" value="XAA-PRO AMINOPEPTIDASE 3"/>
    <property type="match status" value="1"/>
</dbReference>
<dbReference type="PANTHER" id="PTHR43226:SF1">
    <property type="entry name" value="XAA-PRO DIPEPTIDASE"/>
    <property type="match status" value="1"/>
</dbReference>
<dbReference type="Pfam" id="PF05195">
    <property type="entry name" value="AMP_N"/>
    <property type="match status" value="1"/>
</dbReference>
<dbReference type="Pfam" id="PF00557">
    <property type="entry name" value="Peptidase_M24"/>
    <property type="match status" value="1"/>
</dbReference>
<dbReference type="SMART" id="SM01011">
    <property type="entry name" value="AMP_N"/>
    <property type="match status" value="1"/>
</dbReference>
<dbReference type="SUPFAM" id="SSF55920">
    <property type="entry name" value="Creatinase/aminopeptidase"/>
    <property type="match status" value="1"/>
</dbReference>
<dbReference type="SUPFAM" id="SSF53092">
    <property type="entry name" value="Creatinase/prolidase N-terminal domain"/>
    <property type="match status" value="1"/>
</dbReference>
<evidence type="ECO:0000250" key="1"/>
<evidence type="ECO:0000305" key="2"/>
<name>AMPP3_COCP7</name>
<reference key="1">
    <citation type="journal article" date="2009" name="Genome Res.">
        <title>Comparative genomic analyses of the human fungal pathogens Coccidioides and their relatives.</title>
        <authorList>
            <person name="Sharpton T.J."/>
            <person name="Stajich J.E."/>
            <person name="Rounsley S.D."/>
            <person name="Gardner M.J."/>
            <person name="Wortman J.R."/>
            <person name="Jordar V.S."/>
            <person name="Maiti R."/>
            <person name="Kodira C.D."/>
            <person name="Neafsey D.E."/>
            <person name="Zeng Q."/>
            <person name="Hung C.-Y."/>
            <person name="McMahan C."/>
            <person name="Muszewska A."/>
            <person name="Grynberg M."/>
            <person name="Mandel M.A."/>
            <person name="Kellner E.M."/>
            <person name="Barker B.M."/>
            <person name="Galgiani J.N."/>
            <person name="Orbach M.J."/>
            <person name="Kirkland T.N."/>
            <person name="Cole G.T."/>
            <person name="Henn M.R."/>
            <person name="Birren B.W."/>
            <person name="Taylor J.W."/>
        </authorList>
    </citation>
    <scope>NUCLEOTIDE SEQUENCE [LARGE SCALE GENOMIC DNA]</scope>
    <source>
        <strain>C735</strain>
    </source>
</reference>
<sequence>MDSAVTAVLAGKYPAKQHARRVAEALKASGHDGSGVIYLEGTKTRMAEDSDEAVPFRQRRNFYYLSGCELADSYVTYNIDQDELVLYIPAADPDEVMWTGLPLSPEEALKKYDVDKVLASSEINAHLAHYCTNKETAPKRVYAIPDRVCAETTFLPFDDTNWDALSNALNQCRKVKDDYEIALLKRSNEISALAHLAVMKAAKLAKNERELEAVFRSTCLSHGSRGQSYGPIVAAGVNGATLHYQTNDMDLEDPVTGERPSLLVDAGGEYRLYCSDITRAYPLSGKFSVEARQIYDIVLDMQTQCMDMIKPGVAWDDIHARAHKVAISGLLRLGILRGSEEELFEKRISVAFFPHGLGHYMGMDTHDVGGNPNHADPNPMFRYLRLRGTLSPSEVVTVEPGVYFCRFIIEPYLSSPELGKYIDSAVLDKYWKVGGVRIEDNLVITQDGYLNLTTAPKDPEEVERIVQQG</sequence>
<comment type="function">
    <text evidence="1">Catalyzes the removal of a penultimate prolyl residue from the N-termini of peptides.</text>
</comment>
<comment type="catalytic activity">
    <reaction>
        <text>Release of any N-terminal amino acid, including proline, that is linked to proline, even from a dipeptide or tripeptide.</text>
        <dbReference type="EC" id="3.4.11.9"/>
    </reaction>
</comment>
<comment type="cofactor">
    <cofactor evidence="1">
        <name>Mn(2+)</name>
        <dbReference type="ChEBI" id="CHEBI:29035"/>
    </cofactor>
    <text evidence="1">Binds 2 manganese ions per subunit.</text>
</comment>
<comment type="similarity">
    <text evidence="2">Belongs to the peptidase M24B family.</text>
</comment>